<protein>
    <recommendedName>
        <fullName evidence="1">dCTP deaminase</fullName>
        <ecNumber evidence="1">3.5.4.13</ecNumber>
    </recommendedName>
    <alternativeName>
        <fullName evidence="1">Deoxycytidine triphosphate deaminase</fullName>
    </alternativeName>
</protein>
<gene>
    <name evidence="1" type="primary">dcd</name>
    <name type="ordered locus">NTHI0219</name>
</gene>
<proteinExistence type="inferred from homology"/>
<evidence type="ECO:0000255" key="1">
    <source>
        <dbReference type="HAMAP-Rule" id="MF_00146"/>
    </source>
</evidence>
<evidence type="ECO:0000256" key="2">
    <source>
        <dbReference type="SAM" id="MobiDB-lite"/>
    </source>
</evidence>
<dbReference type="EC" id="3.5.4.13" evidence="1"/>
<dbReference type="EMBL" id="CP000057">
    <property type="protein sequence ID" value="AAX87193.1"/>
    <property type="molecule type" value="Genomic_DNA"/>
</dbReference>
<dbReference type="RefSeq" id="WP_005649599.1">
    <property type="nucleotide sequence ID" value="NC_007146.2"/>
</dbReference>
<dbReference type="SMR" id="Q4QP54"/>
<dbReference type="GeneID" id="93219067"/>
<dbReference type="KEGG" id="hit:NTHI0219"/>
<dbReference type="HOGENOM" id="CLU_087476_2_0_6"/>
<dbReference type="UniPathway" id="UPA00610">
    <property type="reaction ID" value="UER00665"/>
</dbReference>
<dbReference type="Proteomes" id="UP000002525">
    <property type="component" value="Chromosome"/>
</dbReference>
<dbReference type="GO" id="GO:0008829">
    <property type="term" value="F:dCTP deaminase activity"/>
    <property type="evidence" value="ECO:0007669"/>
    <property type="project" value="UniProtKB-UniRule"/>
</dbReference>
<dbReference type="GO" id="GO:0000166">
    <property type="term" value="F:nucleotide binding"/>
    <property type="evidence" value="ECO:0007669"/>
    <property type="project" value="UniProtKB-KW"/>
</dbReference>
<dbReference type="GO" id="GO:0006226">
    <property type="term" value="P:dUMP biosynthetic process"/>
    <property type="evidence" value="ECO:0007669"/>
    <property type="project" value="UniProtKB-UniPathway"/>
</dbReference>
<dbReference type="GO" id="GO:0006229">
    <property type="term" value="P:dUTP biosynthetic process"/>
    <property type="evidence" value="ECO:0007669"/>
    <property type="project" value="UniProtKB-UniRule"/>
</dbReference>
<dbReference type="GO" id="GO:0015949">
    <property type="term" value="P:nucleobase-containing small molecule interconversion"/>
    <property type="evidence" value="ECO:0007669"/>
    <property type="project" value="TreeGrafter"/>
</dbReference>
<dbReference type="CDD" id="cd07557">
    <property type="entry name" value="trimeric_dUTPase"/>
    <property type="match status" value="1"/>
</dbReference>
<dbReference type="FunFam" id="2.70.40.10:FF:000003">
    <property type="entry name" value="dCTP deaminase"/>
    <property type="match status" value="1"/>
</dbReference>
<dbReference type="Gene3D" id="2.70.40.10">
    <property type="match status" value="1"/>
</dbReference>
<dbReference type="HAMAP" id="MF_00146">
    <property type="entry name" value="dCTP_deaminase"/>
    <property type="match status" value="1"/>
</dbReference>
<dbReference type="InterPro" id="IPR011962">
    <property type="entry name" value="dCTP_deaminase"/>
</dbReference>
<dbReference type="InterPro" id="IPR036157">
    <property type="entry name" value="dUTPase-like_sf"/>
</dbReference>
<dbReference type="InterPro" id="IPR033704">
    <property type="entry name" value="dUTPase_trimeric"/>
</dbReference>
<dbReference type="NCBIfam" id="TIGR02274">
    <property type="entry name" value="dCTP_deam"/>
    <property type="match status" value="1"/>
</dbReference>
<dbReference type="PANTHER" id="PTHR42680">
    <property type="entry name" value="DCTP DEAMINASE"/>
    <property type="match status" value="1"/>
</dbReference>
<dbReference type="PANTHER" id="PTHR42680:SF3">
    <property type="entry name" value="DCTP DEAMINASE"/>
    <property type="match status" value="1"/>
</dbReference>
<dbReference type="Pfam" id="PF22769">
    <property type="entry name" value="DCD"/>
    <property type="match status" value="1"/>
</dbReference>
<dbReference type="SUPFAM" id="SSF51283">
    <property type="entry name" value="dUTPase-like"/>
    <property type="match status" value="1"/>
</dbReference>
<reference key="1">
    <citation type="journal article" date="2005" name="J. Bacteriol.">
        <title>Genomic sequence of an otitis media isolate of nontypeable Haemophilus influenzae: comparative study with H. influenzae serotype d, strain KW20.</title>
        <authorList>
            <person name="Harrison A."/>
            <person name="Dyer D.W."/>
            <person name="Gillaspy A."/>
            <person name="Ray W.C."/>
            <person name="Mungur R."/>
            <person name="Carson M.B."/>
            <person name="Zhong H."/>
            <person name="Gipson J."/>
            <person name="Gipson M."/>
            <person name="Johnson L.S."/>
            <person name="Lewis L."/>
            <person name="Bakaletz L.O."/>
            <person name="Munson R.S. Jr."/>
        </authorList>
    </citation>
    <scope>NUCLEOTIDE SEQUENCE [LARGE SCALE GENOMIC DNA]</scope>
    <source>
        <strain>86-028NP</strain>
    </source>
</reference>
<organism>
    <name type="scientific">Haemophilus influenzae (strain 86-028NP)</name>
    <dbReference type="NCBI Taxonomy" id="281310"/>
    <lineage>
        <taxon>Bacteria</taxon>
        <taxon>Pseudomonadati</taxon>
        <taxon>Pseudomonadota</taxon>
        <taxon>Gammaproteobacteria</taxon>
        <taxon>Pasteurellales</taxon>
        <taxon>Pasteurellaceae</taxon>
        <taxon>Haemophilus</taxon>
    </lineage>
</organism>
<sequence length="195" mass="21578">MRLCDTDIERYLDDGIISLTPRPNNDKINGATIDVRLGNSFRVFREHSAPFIDLSGPKEEVSAQLESVMSDEILIPEGEAFFLHPGTLALATTLESVKLPANIIGWLDGRSSLARLGLMVHVTAHRIDPGWEGKIVLEFYNSGKLPLALRPNMVIGALSFEVLSGEAKRPYSSRKDAKYKNQQSAVASRIDEDKE</sequence>
<feature type="chain" id="PRO_1000009732" description="dCTP deaminase">
    <location>
        <begin position="1"/>
        <end position="195"/>
    </location>
</feature>
<feature type="region of interest" description="Disordered" evidence="2">
    <location>
        <begin position="169"/>
        <end position="195"/>
    </location>
</feature>
<feature type="compositionally biased region" description="Basic and acidic residues" evidence="2">
    <location>
        <begin position="169"/>
        <end position="179"/>
    </location>
</feature>
<feature type="active site" description="Proton donor/acceptor" evidence="1">
    <location>
        <position position="138"/>
    </location>
</feature>
<feature type="binding site" evidence="1">
    <location>
        <begin position="110"/>
        <end position="115"/>
    </location>
    <ligand>
        <name>dCTP</name>
        <dbReference type="ChEBI" id="CHEBI:61481"/>
    </ligand>
</feature>
<feature type="binding site" evidence="1">
    <location>
        <position position="128"/>
    </location>
    <ligand>
        <name>dCTP</name>
        <dbReference type="ChEBI" id="CHEBI:61481"/>
    </ligand>
</feature>
<feature type="binding site" evidence="1">
    <location>
        <begin position="136"/>
        <end position="138"/>
    </location>
    <ligand>
        <name>dCTP</name>
        <dbReference type="ChEBI" id="CHEBI:61481"/>
    </ligand>
</feature>
<feature type="binding site" evidence="1">
    <location>
        <position position="171"/>
    </location>
    <ligand>
        <name>dCTP</name>
        <dbReference type="ChEBI" id="CHEBI:61481"/>
    </ligand>
</feature>
<feature type="binding site" evidence="1">
    <location>
        <position position="178"/>
    </location>
    <ligand>
        <name>dCTP</name>
        <dbReference type="ChEBI" id="CHEBI:61481"/>
    </ligand>
</feature>
<feature type="binding site" evidence="1">
    <location>
        <position position="182"/>
    </location>
    <ligand>
        <name>dCTP</name>
        <dbReference type="ChEBI" id="CHEBI:61481"/>
    </ligand>
</feature>
<accession>Q4QP54</accession>
<keyword id="KW-0378">Hydrolase</keyword>
<keyword id="KW-0546">Nucleotide metabolism</keyword>
<keyword id="KW-0547">Nucleotide-binding</keyword>
<comment type="function">
    <text evidence="1">Catalyzes the deamination of dCTP to dUTP.</text>
</comment>
<comment type="catalytic activity">
    <reaction evidence="1">
        <text>dCTP + H2O + H(+) = dUTP + NH4(+)</text>
        <dbReference type="Rhea" id="RHEA:22680"/>
        <dbReference type="ChEBI" id="CHEBI:15377"/>
        <dbReference type="ChEBI" id="CHEBI:15378"/>
        <dbReference type="ChEBI" id="CHEBI:28938"/>
        <dbReference type="ChEBI" id="CHEBI:61481"/>
        <dbReference type="ChEBI" id="CHEBI:61555"/>
        <dbReference type="EC" id="3.5.4.13"/>
    </reaction>
</comment>
<comment type="pathway">
    <text evidence="1">Pyrimidine metabolism; dUMP biosynthesis; dUMP from dCTP (dUTP route): step 1/2.</text>
</comment>
<comment type="subunit">
    <text evidence="1">Homotrimer.</text>
</comment>
<comment type="similarity">
    <text evidence="1">Belongs to the dCTP deaminase family.</text>
</comment>
<name>DCD_HAEI8</name>